<gene>
    <name evidence="2" type="primary">tal</name>
    <name type="ordered locus">Shew185_1111</name>
</gene>
<keyword id="KW-0963">Cytoplasm</keyword>
<keyword id="KW-0570">Pentose shunt</keyword>
<keyword id="KW-0704">Schiff base</keyword>
<keyword id="KW-0808">Transferase</keyword>
<proteinExistence type="inferred from homology"/>
<dbReference type="EC" id="2.2.1.2" evidence="2"/>
<dbReference type="EMBL" id="CP000753">
    <property type="protein sequence ID" value="ABS07263.1"/>
    <property type="molecule type" value="Genomic_DNA"/>
</dbReference>
<dbReference type="RefSeq" id="WP_012088519.1">
    <property type="nucleotide sequence ID" value="NC_009665.1"/>
</dbReference>
<dbReference type="SMR" id="A6WKC4"/>
<dbReference type="KEGG" id="sbm:Shew185_1111"/>
<dbReference type="HOGENOM" id="CLU_047470_0_1_6"/>
<dbReference type="UniPathway" id="UPA00115">
    <property type="reaction ID" value="UER00414"/>
</dbReference>
<dbReference type="GO" id="GO:0005829">
    <property type="term" value="C:cytosol"/>
    <property type="evidence" value="ECO:0007669"/>
    <property type="project" value="TreeGrafter"/>
</dbReference>
<dbReference type="GO" id="GO:0004801">
    <property type="term" value="F:transaldolase activity"/>
    <property type="evidence" value="ECO:0000250"/>
    <property type="project" value="UniProtKB"/>
</dbReference>
<dbReference type="GO" id="GO:0005975">
    <property type="term" value="P:carbohydrate metabolic process"/>
    <property type="evidence" value="ECO:0007669"/>
    <property type="project" value="InterPro"/>
</dbReference>
<dbReference type="GO" id="GO:0006098">
    <property type="term" value="P:pentose-phosphate shunt"/>
    <property type="evidence" value="ECO:0007669"/>
    <property type="project" value="UniProtKB-UniRule"/>
</dbReference>
<dbReference type="CDD" id="cd00957">
    <property type="entry name" value="Transaldolase_TalAB"/>
    <property type="match status" value="1"/>
</dbReference>
<dbReference type="FunFam" id="3.20.20.70:FF:000002">
    <property type="entry name" value="Transaldolase"/>
    <property type="match status" value="1"/>
</dbReference>
<dbReference type="Gene3D" id="3.20.20.70">
    <property type="entry name" value="Aldolase class I"/>
    <property type="match status" value="1"/>
</dbReference>
<dbReference type="HAMAP" id="MF_00492">
    <property type="entry name" value="Transaldolase_1"/>
    <property type="match status" value="1"/>
</dbReference>
<dbReference type="InterPro" id="IPR013785">
    <property type="entry name" value="Aldolase_TIM"/>
</dbReference>
<dbReference type="InterPro" id="IPR001585">
    <property type="entry name" value="TAL/FSA"/>
</dbReference>
<dbReference type="InterPro" id="IPR004730">
    <property type="entry name" value="Transaldolase_1"/>
</dbReference>
<dbReference type="InterPro" id="IPR018225">
    <property type="entry name" value="Transaldolase_AS"/>
</dbReference>
<dbReference type="NCBIfam" id="NF009001">
    <property type="entry name" value="PRK12346.1"/>
    <property type="match status" value="1"/>
</dbReference>
<dbReference type="NCBIfam" id="TIGR00874">
    <property type="entry name" value="talAB"/>
    <property type="match status" value="1"/>
</dbReference>
<dbReference type="PANTHER" id="PTHR10683">
    <property type="entry name" value="TRANSALDOLASE"/>
    <property type="match status" value="1"/>
</dbReference>
<dbReference type="PANTHER" id="PTHR10683:SF18">
    <property type="entry name" value="TRANSALDOLASE"/>
    <property type="match status" value="1"/>
</dbReference>
<dbReference type="Pfam" id="PF00923">
    <property type="entry name" value="TAL_FSA"/>
    <property type="match status" value="1"/>
</dbReference>
<dbReference type="SUPFAM" id="SSF51569">
    <property type="entry name" value="Aldolase"/>
    <property type="match status" value="1"/>
</dbReference>
<dbReference type="PROSITE" id="PS01054">
    <property type="entry name" value="TRANSALDOLASE_1"/>
    <property type="match status" value="1"/>
</dbReference>
<dbReference type="PROSITE" id="PS00958">
    <property type="entry name" value="TRANSALDOLASE_2"/>
    <property type="match status" value="1"/>
</dbReference>
<organism>
    <name type="scientific">Shewanella baltica (strain OS185)</name>
    <dbReference type="NCBI Taxonomy" id="402882"/>
    <lineage>
        <taxon>Bacteria</taxon>
        <taxon>Pseudomonadati</taxon>
        <taxon>Pseudomonadota</taxon>
        <taxon>Gammaproteobacteria</taxon>
        <taxon>Alteromonadales</taxon>
        <taxon>Shewanellaceae</taxon>
        <taxon>Shewanella</taxon>
    </lineage>
</organism>
<feature type="chain" id="PRO_1000014522" description="Transaldolase">
    <location>
        <begin position="1"/>
        <end position="318"/>
    </location>
</feature>
<feature type="active site" description="Schiff-base intermediate with substrate" evidence="2">
    <location>
        <position position="132"/>
    </location>
</feature>
<accession>A6WKC4</accession>
<protein>
    <recommendedName>
        <fullName evidence="2">Transaldolase</fullName>
        <ecNumber evidence="2">2.2.1.2</ecNumber>
    </recommendedName>
</protein>
<name>TAL_SHEB8</name>
<sequence>MANTLEQLKLYTTIVADTGDIEAIKRYQPEDATTNPSLILKAAQIPEYESLIDNAIDWAKSQSDDLAQQLDDASDKLAVNIGVEILKLVPGRISTEVDARLSFDKEQSIAKAHKLVRLYKEAGVDKSRILIKLASTWEGICAAKELEKEGINCNLTLLFSFAQARACAEAGAYLISPFVGRILDWYKKDTGKDYDAVNDPGVVSVTEIYNYYKQHGFNTVVMGASFRNIGEIIELAGCDRLTIGPSLLEELANSQVDITPKLVAATSTVAAEAPLTEAQFRWDFNQDPMAVDKLAEGIRNFAIDQGKLEVMLTAKLAN</sequence>
<reference key="1">
    <citation type="submission" date="2007-07" db="EMBL/GenBank/DDBJ databases">
        <title>Complete sequence of chromosome of Shewanella baltica OS185.</title>
        <authorList>
            <consortium name="US DOE Joint Genome Institute"/>
            <person name="Copeland A."/>
            <person name="Lucas S."/>
            <person name="Lapidus A."/>
            <person name="Barry K."/>
            <person name="Glavina del Rio T."/>
            <person name="Dalin E."/>
            <person name="Tice H."/>
            <person name="Pitluck S."/>
            <person name="Sims D."/>
            <person name="Brettin T."/>
            <person name="Bruce D."/>
            <person name="Detter J.C."/>
            <person name="Han C."/>
            <person name="Schmutz J."/>
            <person name="Larimer F."/>
            <person name="Land M."/>
            <person name="Hauser L."/>
            <person name="Kyrpides N."/>
            <person name="Mikhailova N."/>
            <person name="Brettar I."/>
            <person name="Rodrigues J."/>
            <person name="Konstantinidis K."/>
            <person name="Tiedje J."/>
            <person name="Richardson P."/>
        </authorList>
    </citation>
    <scope>NUCLEOTIDE SEQUENCE [LARGE SCALE GENOMIC DNA]</scope>
    <source>
        <strain>OS185</strain>
    </source>
</reference>
<evidence type="ECO:0000250" key="1"/>
<evidence type="ECO:0000255" key="2">
    <source>
        <dbReference type="HAMAP-Rule" id="MF_00492"/>
    </source>
</evidence>
<comment type="function">
    <text evidence="2">Transaldolase is important for the balance of metabolites in the pentose-phosphate pathway.</text>
</comment>
<comment type="catalytic activity">
    <reaction evidence="2">
        <text>D-sedoheptulose 7-phosphate + D-glyceraldehyde 3-phosphate = D-erythrose 4-phosphate + beta-D-fructose 6-phosphate</text>
        <dbReference type="Rhea" id="RHEA:17053"/>
        <dbReference type="ChEBI" id="CHEBI:16897"/>
        <dbReference type="ChEBI" id="CHEBI:57483"/>
        <dbReference type="ChEBI" id="CHEBI:57634"/>
        <dbReference type="ChEBI" id="CHEBI:59776"/>
        <dbReference type="EC" id="2.2.1.2"/>
    </reaction>
</comment>
<comment type="pathway">
    <text evidence="2">Carbohydrate degradation; pentose phosphate pathway; D-glyceraldehyde 3-phosphate and beta-D-fructose 6-phosphate from D-ribose 5-phosphate and D-xylulose 5-phosphate (non-oxidative stage): step 2/3.</text>
</comment>
<comment type="subunit">
    <text evidence="1">Homodimer.</text>
</comment>
<comment type="subcellular location">
    <subcellularLocation>
        <location evidence="2">Cytoplasm</location>
    </subcellularLocation>
</comment>
<comment type="similarity">
    <text evidence="2">Belongs to the transaldolase family. Type 1 subfamily.</text>
</comment>